<gene>
    <name evidence="14" type="primary">gliG</name>
    <name type="ORF">AFUA_6G09690</name>
</gene>
<reference key="1">
    <citation type="journal article" date="2005" name="FEMS Microbiol. Lett.">
        <title>Bioinformatic and expression analysis of the putative gliotoxin biosynthetic gene cluster of Aspergillus fumigatus.</title>
        <authorList>
            <person name="Gardiner D.M."/>
            <person name="Howlett B.J."/>
        </authorList>
    </citation>
    <scope>NUCLEOTIDE SEQUENCE [GENOMIC DNA]</scope>
    <scope>FUNCTION</scope>
    <source>
        <strain>ATCC MYA-4609 / CBS 101355 / FGSC A1100 / Af293</strain>
    </source>
</reference>
<reference key="2">
    <citation type="journal article" date="2005" name="Nature">
        <title>Genomic sequence of the pathogenic and allergenic filamentous fungus Aspergillus fumigatus.</title>
        <authorList>
            <person name="Nierman W.C."/>
            <person name="Pain A."/>
            <person name="Anderson M.J."/>
            <person name="Wortman J.R."/>
            <person name="Kim H.S."/>
            <person name="Arroyo J."/>
            <person name="Berriman M."/>
            <person name="Abe K."/>
            <person name="Archer D.B."/>
            <person name="Bermejo C."/>
            <person name="Bennett J.W."/>
            <person name="Bowyer P."/>
            <person name="Chen D."/>
            <person name="Collins M."/>
            <person name="Coulsen R."/>
            <person name="Davies R."/>
            <person name="Dyer P.S."/>
            <person name="Farman M.L."/>
            <person name="Fedorova N."/>
            <person name="Fedorova N.D."/>
            <person name="Feldblyum T.V."/>
            <person name="Fischer R."/>
            <person name="Fosker N."/>
            <person name="Fraser A."/>
            <person name="Garcia J.L."/>
            <person name="Garcia M.J."/>
            <person name="Goble A."/>
            <person name="Goldman G.H."/>
            <person name="Gomi K."/>
            <person name="Griffith-Jones S."/>
            <person name="Gwilliam R."/>
            <person name="Haas B.J."/>
            <person name="Haas H."/>
            <person name="Harris D.E."/>
            <person name="Horiuchi H."/>
            <person name="Huang J."/>
            <person name="Humphray S."/>
            <person name="Jimenez J."/>
            <person name="Keller N."/>
            <person name="Khouri H."/>
            <person name="Kitamoto K."/>
            <person name="Kobayashi T."/>
            <person name="Konzack S."/>
            <person name="Kulkarni R."/>
            <person name="Kumagai T."/>
            <person name="Lafton A."/>
            <person name="Latge J.-P."/>
            <person name="Li W."/>
            <person name="Lord A."/>
            <person name="Lu C."/>
            <person name="Majoros W.H."/>
            <person name="May G.S."/>
            <person name="Miller B.L."/>
            <person name="Mohamoud Y."/>
            <person name="Molina M."/>
            <person name="Monod M."/>
            <person name="Mouyna I."/>
            <person name="Mulligan S."/>
            <person name="Murphy L.D."/>
            <person name="O'Neil S."/>
            <person name="Paulsen I."/>
            <person name="Penalva M.A."/>
            <person name="Pertea M."/>
            <person name="Price C."/>
            <person name="Pritchard B.L."/>
            <person name="Quail M.A."/>
            <person name="Rabbinowitsch E."/>
            <person name="Rawlins N."/>
            <person name="Rajandream M.A."/>
            <person name="Reichard U."/>
            <person name="Renauld H."/>
            <person name="Robson G.D."/>
            <person name="Rodriguez de Cordoba S."/>
            <person name="Rodriguez-Pena J.M."/>
            <person name="Ronning C.M."/>
            <person name="Rutter S."/>
            <person name="Salzberg S.L."/>
            <person name="Sanchez M."/>
            <person name="Sanchez-Ferrero J.C."/>
            <person name="Saunders D."/>
            <person name="Seeger K."/>
            <person name="Squares R."/>
            <person name="Squares S."/>
            <person name="Takeuchi M."/>
            <person name="Tekaia F."/>
            <person name="Turner G."/>
            <person name="Vazquez de Aldana C.R."/>
            <person name="Weidman J."/>
            <person name="White O."/>
            <person name="Woodward J.R."/>
            <person name="Yu J.-H."/>
            <person name="Fraser C.M."/>
            <person name="Galagan J.E."/>
            <person name="Asai K."/>
            <person name="Machida M."/>
            <person name="Hall N."/>
            <person name="Barrell B.G."/>
            <person name="Denning D.W."/>
        </authorList>
    </citation>
    <scope>NUCLEOTIDE SEQUENCE [LARGE SCALE GENOMIC DNA]</scope>
    <source>
        <strain>ATCC MYA-4609 / CBS 101355 / FGSC A1100 / Af293</strain>
    </source>
</reference>
<reference key="3">
    <citation type="journal article" date="2006" name="Biochemistry">
        <title>GliP, a multimodular nonribosomal peptide synthetase in Aspergillus fumigatus, makes the diketopiperazine scaffold of gliotoxin.</title>
        <authorList>
            <person name="Balibar C.J."/>
            <person name="Walsh C.T."/>
        </authorList>
    </citation>
    <scope>FUNCTION</scope>
</reference>
<reference key="4">
    <citation type="journal article" date="2007" name="Eukaryot. Cell">
        <title>Gliotoxin is a virulence factor of Aspergillus fumigatus: gliP deletion attenuates virulence in mice immunosuppressed with hydrocortisone.</title>
        <authorList>
            <person name="Sugui J.A."/>
            <person name="Pardo J."/>
            <person name="Chang Y.C."/>
            <person name="Zarember K.A."/>
            <person name="Nardone G."/>
            <person name="Galvez E.M."/>
            <person name="Mullbacher A."/>
            <person name="Gallin J.I."/>
            <person name="Simon M.M."/>
            <person name="Kwon-Chung K.J."/>
        </authorList>
    </citation>
    <scope>FUNCTION</scope>
</reference>
<reference key="5">
    <citation type="journal article" date="2008" name="J. Infect. Dis.">
        <title>Gliotoxin production in Aspergillus fumigatus contributes to host-specific differences in virulence.</title>
        <authorList>
            <person name="Spikes S."/>
            <person name="Xu R."/>
            <person name="Nguyen C.K."/>
            <person name="Chamilos G."/>
            <person name="Kontoyiannis D.P."/>
            <person name="Jacobson R.H."/>
            <person name="Ejzykowicz D.E."/>
            <person name="Chiang L.Y."/>
            <person name="Filler S.G."/>
            <person name="May G.S."/>
        </authorList>
    </citation>
    <scope>FUNCTION</scope>
</reference>
<reference key="6">
    <citation type="journal article" date="2010" name="PLoS Pathog.">
        <title>Self-protection against gliotoxin--a component of the gliotoxin biosynthetic cluster, GliT, completely protects Aspergillus fumigatus against exogenous gliotoxin.</title>
        <authorList>
            <person name="Schrettl M."/>
            <person name="Carberry S."/>
            <person name="Kavanagh K."/>
            <person name="Haas H."/>
            <person name="Jones G.W."/>
            <person name="O'Brien J."/>
            <person name="Nolan A."/>
            <person name="Stephens J."/>
            <person name="Fenelon O."/>
            <person name="Doyle S."/>
        </authorList>
    </citation>
    <scope>FUNCTION</scope>
</reference>
<reference key="7">
    <citation type="journal article" date="2011" name="Chem. Biol.">
        <title>The role of glutathione S-transferase GliG in gliotoxin biosynthesis in Aspergillus fumigatus.</title>
        <authorList>
            <person name="Davis C."/>
            <person name="Carberry S."/>
            <person name="Schrettl M."/>
            <person name="Singh I."/>
            <person name="Stephens J.C."/>
            <person name="Barry S.M."/>
            <person name="Kavanagh K."/>
            <person name="Challis G.L."/>
            <person name="Brougham D."/>
            <person name="Doyle S."/>
        </authorList>
    </citation>
    <scope>FUNCTION</scope>
    <scope>CATALYTIC ACTIVITY</scope>
    <scope>DISRUPTION PHENOTYPE</scope>
</reference>
<reference key="8">
    <citation type="journal article" date="2011" name="J. Am. Chem. Soc.">
        <title>Identification of cryptic products of the gliotoxin gene cluster using NMR-based comparative metabolomics and a model for gliotoxin biosynthesis.</title>
        <authorList>
            <person name="Forseth R.R."/>
            <person name="Fox E.M."/>
            <person name="Chung D."/>
            <person name="Howlett B.J."/>
            <person name="Keller N.P."/>
            <person name="Schroeder F.C."/>
        </authorList>
    </citation>
    <scope>FUNCTION</scope>
</reference>
<reference key="9">
    <citation type="journal article" date="2011" name="J. Am. Chem. Soc.">
        <title>A dedicated glutathione S-transferase mediates carbon-sulfur bond formation in gliotoxin biosynthesis.</title>
        <authorList>
            <person name="Scharf D.H."/>
            <person name="Remme N."/>
            <person name="Habel A."/>
            <person name="Chankhamjon P."/>
            <person name="Scherlach K."/>
            <person name="Heinekamp T."/>
            <person name="Hortschansky P."/>
            <person name="Brakhage A.A."/>
            <person name="Hertweck C."/>
        </authorList>
    </citation>
    <scope>FUNCTION</scope>
    <scope>CATALYTIC ACTIVITY</scope>
</reference>
<reference key="10">
    <citation type="journal article" date="2012" name="Angew. Chem. Int. Ed.">
        <title>Epidithiol formation by an unprecedented twin carbon-sulfur lyase in the gliotoxin pathway.</title>
        <authorList>
            <person name="Scharf D.H."/>
            <person name="Chankhamjon P."/>
            <person name="Scherlach K."/>
            <person name="Heinekamp T."/>
            <person name="Roth M."/>
            <person name="Brakhage A.A."/>
            <person name="Hertweck C."/>
        </authorList>
    </citation>
    <scope>FUNCTION</scope>
</reference>
<reference key="11">
    <citation type="journal article" date="2012" name="Eukaryot. Cell">
        <title>The Aspergillus fumigatus protein GliK protects against oxidative stress and is essential for gliotoxin biosynthesis.</title>
        <authorList>
            <person name="Gallagher L."/>
            <person name="Owens R.A."/>
            <person name="Dolan S.K."/>
            <person name="O'Keeffe G."/>
            <person name="Schrettl M."/>
            <person name="Kavanagh K."/>
            <person name="Jones G.W."/>
            <person name="Doyle S."/>
        </authorList>
    </citation>
    <scope>FUNCTION</scope>
</reference>
<reference key="12">
    <citation type="journal article" date="2013" name="Angew. Chem. Int. Ed.">
        <title>Epidithiodiketopiperazine biosynthesis: a four-enzyme cascade converts glutathione conjugates into transannular disulfide bridges.</title>
        <authorList>
            <person name="Scharf D.H."/>
            <person name="Chankhamjon P."/>
            <person name="Scherlach K."/>
            <person name="Heinekamp T."/>
            <person name="Willing K."/>
            <person name="Brakhage A.A."/>
            <person name="Hertweck C."/>
        </authorList>
    </citation>
    <scope>FUNCTION</scope>
</reference>
<reference key="13">
    <citation type="journal article" date="2013" name="Bioorg. Med. Chem. Lett.">
        <title>Reconstitution of the early steps of gliotoxin biosynthesis in Aspergillus nidulans reveals the role of the monooxygenase GliC.</title>
        <authorList>
            <person name="Chang S.L."/>
            <person name="Chiang Y.M."/>
            <person name="Yeh H.H."/>
            <person name="Wu T.K."/>
            <person name="Wang C.C."/>
        </authorList>
    </citation>
    <scope>FUNCTION</scope>
</reference>
<reference key="14">
    <citation type="journal article" date="2014" name="J. Am. Chem. Soc.">
        <title>Opposed effects of enzymatic gliotoxin N- and S-methylations.</title>
        <authorList>
            <person name="Scharf D.H."/>
            <person name="Habel A."/>
            <person name="Heinekamp T."/>
            <person name="Brakhage A.A."/>
            <person name="Hertweck C."/>
        </authorList>
    </citation>
    <scope>FUNCTION</scope>
</reference>
<reference key="15">
    <citation type="journal article" date="2015" name="Eukaryot. Cell">
        <title>Interplay between gliotoxin resistance, secretion, and the methyl/methionine cycle in Aspergillus fumigatus.</title>
        <authorList>
            <person name="Owens R.A."/>
            <person name="O'Keeffe G."/>
            <person name="Smith E.B."/>
            <person name="Dolan S.K."/>
            <person name="Hammel S."/>
            <person name="Sheridan K.J."/>
            <person name="Fitzpatrick D.A."/>
            <person name="Keane T.M."/>
            <person name="Jones G.W."/>
            <person name="Doyle S."/>
        </authorList>
    </citation>
    <scope>FUNCTION</scope>
</reference>
<sequence>MSERPSDLVVNRLVLFVVKGTATSTHNTVKPLILLEELGVPHDIYVVEKVSAPWFSEINPHKMVPAILDRSPDGRDTLRAWESTSTLMYIADAYDKDGTLGGRNVQERSEINNWLTLHTAALGPTAKYWLYFYKLHPEKLPKTIEKLRSNITVQYDILERRLNEPGQQYLALKDRPTIADIATLPFAMKSTAELFGLEFEKWPKLQEWSVRMGEREAVKRAWQRVAGFGHGEKEYGMLEA</sequence>
<accession>A4GYZ0</accession>
<accession>Q5MBU2</accession>
<evidence type="ECO:0000255" key="1">
    <source>
        <dbReference type="PROSITE-ProRule" id="PRU00684"/>
    </source>
</evidence>
<evidence type="ECO:0000255" key="2">
    <source>
        <dbReference type="PROSITE-ProRule" id="PRU00685"/>
    </source>
</evidence>
<evidence type="ECO:0000269" key="3">
    <source>
    </source>
</evidence>
<evidence type="ECO:0000269" key="4">
    <source>
    </source>
</evidence>
<evidence type="ECO:0000269" key="5">
    <source>
    </source>
</evidence>
<evidence type="ECO:0000269" key="6">
    <source>
    </source>
</evidence>
<evidence type="ECO:0000269" key="7">
    <source>
    </source>
</evidence>
<evidence type="ECO:0000269" key="8">
    <source>
    </source>
</evidence>
<evidence type="ECO:0000269" key="9">
    <source>
    </source>
</evidence>
<evidence type="ECO:0000269" key="10">
    <source>
    </source>
</evidence>
<evidence type="ECO:0000269" key="11">
    <source>
    </source>
</evidence>
<evidence type="ECO:0000269" key="12">
    <source>
    </source>
</evidence>
<evidence type="ECO:0000269" key="13">
    <source>
    </source>
</evidence>
<evidence type="ECO:0000303" key="14">
    <source>
    </source>
</evidence>
<evidence type="ECO:0000305" key="15"/>
<organism>
    <name type="scientific">Aspergillus fumigatus (strain ATCC MYA-4609 / CBS 101355 / FGSC A1100 / Af293)</name>
    <name type="common">Neosartorya fumigata</name>
    <dbReference type="NCBI Taxonomy" id="330879"/>
    <lineage>
        <taxon>Eukaryota</taxon>
        <taxon>Fungi</taxon>
        <taxon>Dikarya</taxon>
        <taxon>Ascomycota</taxon>
        <taxon>Pezizomycotina</taxon>
        <taxon>Eurotiomycetes</taxon>
        <taxon>Eurotiomycetidae</taxon>
        <taxon>Eurotiales</taxon>
        <taxon>Aspergillaceae</taxon>
        <taxon>Aspergillus</taxon>
        <taxon>Aspergillus subgen. Fumigati</taxon>
    </lineage>
</organism>
<feature type="chain" id="PRO_0000437724" description="Glutathione S-transferase gliG">
    <location>
        <begin position="1"/>
        <end position="240"/>
    </location>
</feature>
<feature type="domain" description="GST N-terminal" evidence="1">
    <location>
        <begin position="15"/>
        <end position="98"/>
    </location>
</feature>
<feature type="domain" description="GST C-terminal" evidence="2">
    <location>
        <begin position="104"/>
        <end position="237"/>
    </location>
</feature>
<keyword id="KW-1185">Reference proteome</keyword>
<keyword id="KW-0808">Transferase</keyword>
<keyword id="KW-0843">Virulence</keyword>
<name>GLIG_ASPFU</name>
<proteinExistence type="evidence at protein level"/>
<comment type="function">
    <text evidence="3 4 5 6 7 8 9 10 11 12 13">Glutathione S-transferase; part of the gene cluster that mediates the biosynthesis of gliotoxin, a member of the epipolythiodioxopiperazine (ETP) class of toxins characterized by a disulfide bridged cyclic dipeptide (PubMed:15979823, PubMed:21612254). The first step in gliotoxin biosynthesis is the condensation of serine and phenylalanine to form the cyclo-L-phenylalanyl-L-serine diketopiperazine (DKP) by the NRPS gliP (PubMed:17154540, PubMed:21612254). GliP is also able to produce the DKP cyclo-L-tryptophanyl-L-serine, suggesting that the substrate specificity of the first adenylation (A) domain in gliP is sufficiently relaxed to accommodate both L-Phe and L-Trp (PubMed:23434416). The cytochrome P450 monooxygenase gliC has been shown to catalyze the subsequent hydroxylation of the alpha-carbon of L-Phe in cyclo-L-phenylalanyl-L-serine whereas the second cytochrome P450 enzyme, gliF, is presumably involved in the modification of the DKP side chain (PubMed:23434416, PubMed:24039048). The glutathione S-transferase (GST) gliG then forms a bis-glutathionylated biosynthetic intermediate which is responsible for the sulfurization of gliotoxin (PubMed:21513890, PubMed:21749092). This bis-glutathionylated intermediate is subsequently processed by the gamma-glutamyl cyclotransferase gliK to remove both gamma-glutamyl moieties (PubMed:22903976, PubMed:24039048). Subsequent processing via gliI yields a biosynthetic intermediate, which is N-methylated via the N-methyltransferase gliN, before the gliotoxin oxidoreductase gliT-mediated disulfide bridge closure (PubMed:20548963, PubMed:22936680, PubMed:24039048, PubMed:25062268). GliN-mediated amide methylation confers stability to ETP, damping the spontaneous formation of tri- and tetrasulfides (PubMed:25062268). Intracellular dithiol gliotoxin oxidized by gliT is subsequently effluxed by gliA (PubMed:26150413). Gliotoxin contributes to pathogenesis during invasive aspergillosis (PubMed:17601876, PubMed:18199036). In macrophages and neutrophils, gliotoxin showed inhibition of various different cell functions including cytokine production, antigen presentation, phagocytosis, and production of reactive oxygen species (PubMed:17601876).</text>
</comment>
<comment type="catalytic activity">
    <reaction evidence="6 8">
        <text>RX + glutathione = an S-substituted glutathione + a halide anion + H(+)</text>
        <dbReference type="Rhea" id="RHEA:16437"/>
        <dbReference type="ChEBI" id="CHEBI:15378"/>
        <dbReference type="ChEBI" id="CHEBI:16042"/>
        <dbReference type="ChEBI" id="CHEBI:17792"/>
        <dbReference type="ChEBI" id="CHEBI:57925"/>
        <dbReference type="ChEBI" id="CHEBI:90779"/>
        <dbReference type="EC" id="2.5.1.18"/>
    </reaction>
</comment>
<comment type="pathway">
    <text evidence="6 8">Mycotoxin biosynthesis.</text>
</comment>
<comment type="disruption phenotype">
    <text evidence="6">Abrogates gliotoxin biosynthesis and leads to the accumulation of the shunt metabolite 6-benzyl-6-hydroxy-1-methoxy-3-methylene-piperazine-2,5-dione (PubMed:21513890).</text>
</comment>
<comment type="similarity">
    <text evidence="15">Belongs to the GST superfamily.</text>
</comment>
<comment type="sequence caution" evidence="15">
    <conflict type="erroneous gene model prediction">
        <sequence resource="EMBL-CDS" id="AAW03304"/>
    </conflict>
</comment>
<dbReference type="EC" id="2.5.1.18" evidence="6 8"/>
<dbReference type="EMBL" id="AY838877">
    <property type="protein sequence ID" value="AAW03304.1"/>
    <property type="status" value="ALT_SEQ"/>
    <property type="molecule type" value="Genomic_DNA"/>
</dbReference>
<dbReference type="EMBL" id="AAHF01000006">
    <property type="protein sequence ID" value="EAL88820.2"/>
    <property type="molecule type" value="Genomic_DNA"/>
</dbReference>
<dbReference type="RefSeq" id="XP_750858.2">
    <property type="nucleotide sequence ID" value="XM_745765.2"/>
</dbReference>
<dbReference type="SMR" id="A4GYZ0"/>
<dbReference type="STRING" id="330879.A4GYZ0"/>
<dbReference type="EnsemblFungi" id="EAL88820">
    <property type="protein sequence ID" value="EAL88820"/>
    <property type="gene ID" value="AFUA_6G09690"/>
</dbReference>
<dbReference type="GeneID" id="3508163"/>
<dbReference type="KEGG" id="afm:AFUA_6G09690"/>
<dbReference type="VEuPathDB" id="FungiDB:Afu6g09690"/>
<dbReference type="eggNOG" id="KOG0867">
    <property type="taxonomic scope" value="Eukaryota"/>
</dbReference>
<dbReference type="HOGENOM" id="CLU_011226_14_2_1"/>
<dbReference type="InParanoid" id="A4GYZ0"/>
<dbReference type="OMA" id="THNTVKP"/>
<dbReference type="OrthoDB" id="2789670at2759"/>
<dbReference type="BioCyc" id="MetaCyc:MONOMER-18849"/>
<dbReference type="Proteomes" id="UP000002530">
    <property type="component" value="Chromosome 6"/>
</dbReference>
<dbReference type="GO" id="GO:0005737">
    <property type="term" value="C:cytoplasm"/>
    <property type="evidence" value="ECO:0000318"/>
    <property type="project" value="GO_Central"/>
</dbReference>
<dbReference type="GO" id="GO:0004364">
    <property type="term" value="F:glutathione transferase activity"/>
    <property type="evidence" value="ECO:0000314"/>
    <property type="project" value="AspGD"/>
</dbReference>
<dbReference type="GO" id="GO:2001310">
    <property type="term" value="P:gliotoxin biosynthetic process"/>
    <property type="evidence" value="ECO:0000315"/>
    <property type="project" value="AspGD"/>
</dbReference>
<dbReference type="GO" id="GO:0043386">
    <property type="term" value="P:mycotoxin biosynthetic process"/>
    <property type="evidence" value="ECO:0000315"/>
    <property type="project" value="AspGD"/>
</dbReference>
<dbReference type="FunFam" id="1.20.1050.130:FF:000012">
    <property type="entry name" value="Glutathione S-transferase gliG"/>
    <property type="match status" value="1"/>
</dbReference>
<dbReference type="Gene3D" id="1.20.1050.130">
    <property type="match status" value="1"/>
</dbReference>
<dbReference type="InterPro" id="IPR010987">
    <property type="entry name" value="Glutathione-S-Trfase_C-like"/>
</dbReference>
<dbReference type="InterPro" id="IPR036282">
    <property type="entry name" value="Glutathione-S-Trfase_C_sf"/>
</dbReference>
<dbReference type="InterPro" id="IPR040079">
    <property type="entry name" value="Glutathione_S-Trfase"/>
</dbReference>
<dbReference type="InterPro" id="IPR004045">
    <property type="entry name" value="Glutathione_S-Trfase_N"/>
</dbReference>
<dbReference type="InterPro" id="IPR004046">
    <property type="entry name" value="GST_C"/>
</dbReference>
<dbReference type="InterPro" id="IPR036249">
    <property type="entry name" value="Thioredoxin-like_sf"/>
</dbReference>
<dbReference type="PANTHER" id="PTHR44051">
    <property type="entry name" value="GLUTATHIONE S-TRANSFERASE-RELATED"/>
    <property type="match status" value="1"/>
</dbReference>
<dbReference type="PANTHER" id="PTHR44051:SF20">
    <property type="entry name" value="GLUTATHIONE TRANSFERASE 1 (EUROFUNG)"/>
    <property type="match status" value="1"/>
</dbReference>
<dbReference type="Pfam" id="PF00043">
    <property type="entry name" value="GST_C"/>
    <property type="match status" value="1"/>
</dbReference>
<dbReference type="Pfam" id="PF13409">
    <property type="entry name" value="GST_N_2"/>
    <property type="match status" value="1"/>
</dbReference>
<dbReference type="SFLD" id="SFLDS00019">
    <property type="entry name" value="Glutathione_Transferase_(cytos"/>
    <property type="match status" value="1"/>
</dbReference>
<dbReference type="SFLD" id="SFLDG00358">
    <property type="entry name" value="Main_(cytGST)"/>
    <property type="match status" value="1"/>
</dbReference>
<dbReference type="SUPFAM" id="SSF47616">
    <property type="entry name" value="GST C-terminal domain-like"/>
    <property type="match status" value="1"/>
</dbReference>
<dbReference type="SUPFAM" id="SSF52833">
    <property type="entry name" value="Thioredoxin-like"/>
    <property type="match status" value="1"/>
</dbReference>
<dbReference type="PROSITE" id="PS50405">
    <property type="entry name" value="GST_CTER"/>
    <property type="match status" value="1"/>
</dbReference>
<dbReference type="PROSITE" id="PS50404">
    <property type="entry name" value="GST_NTER"/>
    <property type="match status" value="1"/>
</dbReference>
<protein>
    <recommendedName>
        <fullName evidence="14">Glutathione S-transferase gliG</fullName>
        <ecNumber evidence="6 8">2.5.1.18</ecNumber>
    </recommendedName>
    <alternativeName>
        <fullName evidence="14">Gliotoxin biosynthesis protein G</fullName>
    </alternativeName>
</protein>